<sequence>MYQDQDFQVFEDQTLAGRLGKIQKQIDPKFLITAGDLEPVLAELSVPIYQHVSQHRRRTKNPPTDTWIAFSTSKRGYKMLPHLEIGFWDDRFFIWLAVLQEAKNRQGLLGQVQLADVLNLPSTFECGNDHADKNCGRPLTLTNYQALMREQVNRHAEWQLGRNFMRGSDLFTTTPDDQAAIIRDTVAALLPIYRQLIAD</sequence>
<comment type="similarity">
    <text evidence="1">Belongs to the UPF0637 family.</text>
</comment>
<name>Y1261_LEVBA</name>
<feature type="chain" id="PRO_0000348304" description="UPF0637 protein LVIS_1261">
    <location>
        <begin position="1"/>
        <end position="199"/>
    </location>
</feature>
<evidence type="ECO:0000255" key="1">
    <source>
        <dbReference type="HAMAP-Rule" id="MF_01851"/>
    </source>
</evidence>
<organism>
    <name type="scientific">Levilactobacillus brevis (strain ATCC 367 / BCRC 12310 / CIP 105137 / JCM 1170 / LMG 11437 / NCIMB 947 / NCTC 947)</name>
    <name type="common">Lactobacillus brevis</name>
    <dbReference type="NCBI Taxonomy" id="387344"/>
    <lineage>
        <taxon>Bacteria</taxon>
        <taxon>Bacillati</taxon>
        <taxon>Bacillota</taxon>
        <taxon>Bacilli</taxon>
        <taxon>Lactobacillales</taxon>
        <taxon>Lactobacillaceae</taxon>
        <taxon>Levilactobacillus</taxon>
    </lineage>
</organism>
<dbReference type="EMBL" id="CP000416">
    <property type="protein sequence ID" value="ABJ64366.1"/>
    <property type="molecule type" value="Genomic_DNA"/>
</dbReference>
<dbReference type="RefSeq" id="WP_011668130.1">
    <property type="nucleotide sequence ID" value="NC_008497.1"/>
</dbReference>
<dbReference type="SMR" id="Q03R06"/>
<dbReference type="STRING" id="387344.LVIS_1261"/>
<dbReference type="KEGG" id="lbr:LVIS_1261"/>
<dbReference type="PATRIC" id="fig|387344.15.peg.1201"/>
<dbReference type="eggNOG" id="COG4493">
    <property type="taxonomic scope" value="Bacteria"/>
</dbReference>
<dbReference type="HOGENOM" id="CLU_096059_0_0_9"/>
<dbReference type="Proteomes" id="UP000001652">
    <property type="component" value="Chromosome"/>
</dbReference>
<dbReference type="Gene3D" id="3.30.930.20">
    <property type="entry name" value="Protein of unknown function DUF1054"/>
    <property type="match status" value="1"/>
</dbReference>
<dbReference type="HAMAP" id="MF_01851">
    <property type="entry name" value="UPF0637"/>
    <property type="match status" value="1"/>
</dbReference>
<dbReference type="InterPro" id="IPR009403">
    <property type="entry name" value="UPF0637"/>
</dbReference>
<dbReference type="InterPro" id="IPR053707">
    <property type="entry name" value="UPF0637_domain_sf"/>
</dbReference>
<dbReference type="Pfam" id="PF06335">
    <property type="entry name" value="DUF1054"/>
    <property type="match status" value="1"/>
</dbReference>
<dbReference type="SUPFAM" id="SSF142913">
    <property type="entry name" value="YktB/PF0168-like"/>
    <property type="match status" value="1"/>
</dbReference>
<gene>
    <name type="ordered locus">LVIS_1261</name>
</gene>
<accession>Q03R06</accession>
<keyword id="KW-1185">Reference proteome</keyword>
<protein>
    <recommendedName>
        <fullName evidence="1">UPF0637 protein LVIS_1261</fullName>
    </recommendedName>
</protein>
<reference key="1">
    <citation type="journal article" date="2006" name="Proc. Natl. Acad. Sci. U.S.A.">
        <title>Comparative genomics of the lactic acid bacteria.</title>
        <authorList>
            <person name="Makarova K.S."/>
            <person name="Slesarev A."/>
            <person name="Wolf Y.I."/>
            <person name="Sorokin A."/>
            <person name="Mirkin B."/>
            <person name="Koonin E.V."/>
            <person name="Pavlov A."/>
            <person name="Pavlova N."/>
            <person name="Karamychev V."/>
            <person name="Polouchine N."/>
            <person name="Shakhova V."/>
            <person name="Grigoriev I."/>
            <person name="Lou Y."/>
            <person name="Rohksar D."/>
            <person name="Lucas S."/>
            <person name="Huang K."/>
            <person name="Goodstein D.M."/>
            <person name="Hawkins T."/>
            <person name="Plengvidhya V."/>
            <person name="Welker D."/>
            <person name="Hughes J."/>
            <person name="Goh Y."/>
            <person name="Benson A."/>
            <person name="Baldwin K."/>
            <person name="Lee J.-H."/>
            <person name="Diaz-Muniz I."/>
            <person name="Dosti B."/>
            <person name="Smeianov V."/>
            <person name="Wechter W."/>
            <person name="Barabote R."/>
            <person name="Lorca G."/>
            <person name="Altermann E."/>
            <person name="Barrangou R."/>
            <person name="Ganesan B."/>
            <person name="Xie Y."/>
            <person name="Rawsthorne H."/>
            <person name="Tamir D."/>
            <person name="Parker C."/>
            <person name="Breidt F."/>
            <person name="Broadbent J.R."/>
            <person name="Hutkins R."/>
            <person name="O'Sullivan D."/>
            <person name="Steele J."/>
            <person name="Unlu G."/>
            <person name="Saier M.H. Jr."/>
            <person name="Klaenhammer T."/>
            <person name="Richardson P."/>
            <person name="Kozyavkin S."/>
            <person name="Weimer B.C."/>
            <person name="Mills D.A."/>
        </authorList>
    </citation>
    <scope>NUCLEOTIDE SEQUENCE [LARGE SCALE GENOMIC DNA]</scope>
    <source>
        <strain>ATCC 367 / BCRC 12310 / CIP 105137 / JCM 1170 / LMG 11437 / NCIMB 947 / NCTC 947</strain>
    </source>
</reference>
<proteinExistence type="inferred from homology"/>